<protein>
    <recommendedName>
        <fullName evidence="1">Undecaprenyl-diphosphatase</fullName>
        <ecNumber evidence="1">3.6.1.27</ecNumber>
    </recommendedName>
    <alternativeName>
        <fullName evidence="1">Bacitracin resistance protein</fullName>
    </alternativeName>
    <alternativeName>
        <fullName evidence="1">Undecaprenyl pyrophosphate phosphatase</fullName>
    </alternativeName>
</protein>
<gene>
    <name evidence="1" type="primary">uppP</name>
    <name type="ordered locus">Maqu_3641</name>
</gene>
<evidence type="ECO:0000255" key="1">
    <source>
        <dbReference type="HAMAP-Rule" id="MF_01006"/>
    </source>
</evidence>
<comment type="function">
    <text evidence="1">Catalyzes the dephosphorylation of undecaprenyl diphosphate (UPP). Confers resistance to bacitracin.</text>
</comment>
<comment type="catalytic activity">
    <reaction evidence="1">
        <text>di-trans,octa-cis-undecaprenyl diphosphate + H2O = di-trans,octa-cis-undecaprenyl phosphate + phosphate + H(+)</text>
        <dbReference type="Rhea" id="RHEA:28094"/>
        <dbReference type="ChEBI" id="CHEBI:15377"/>
        <dbReference type="ChEBI" id="CHEBI:15378"/>
        <dbReference type="ChEBI" id="CHEBI:43474"/>
        <dbReference type="ChEBI" id="CHEBI:58405"/>
        <dbReference type="ChEBI" id="CHEBI:60392"/>
        <dbReference type="EC" id="3.6.1.27"/>
    </reaction>
</comment>
<comment type="subcellular location">
    <subcellularLocation>
        <location evidence="1">Cell inner membrane</location>
        <topology evidence="1">Multi-pass membrane protein</topology>
    </subcellularLocation>
</comment>
<comment type="miscellaneous">
    <text>Bacitracin is thought to be involved in the inhibition of peptidoglycan synthesis by sequestering undecaprenyl diphosphate, thereby reducing the pool of lipid carrier available.</text>
</comment>
<comment type="similarity">
    <text evidence="1">Belongs to the UppP family.</text>
</comment>
<reference key="1">
    <citation type="journal article" date="2011" name="Appl. Environ. Microbiol.">
        <title>Genomic potential of Marinobacter aquaeolei, a biogeochemical 'opportunitroph'.</title>
        <authorList>
            <person name="Singer E."/>
            <person name="Webb E.A."/>
            <person name="Nelson W.C."/>
            <person name="Heidelberg J.F."/>
            <person name="Ivanova N."/>
            <person name="Pati A."/>
            <person name="Edwards K.J."/>
        </authorList>
    </citation>
    <scope>NUCLEOTIDE SEQUENCE [LARGE SCALE GENOMIC DNA]</scope>
    <source>
        <strain>ATCC 700491 / DSM 11845 / VT8</strain>
    </source>
</reference>
<feature type="chain" id="PRO_0000290725" description="Undecaprenyl-diphosphatase">
    <location>
        <begin position="1"/>
        <end position="265"/>
    </location>
</feature>
<feature type="transmembrane region" description="Helical" evidence="1">
    <location>
        <begin position="1"/>
        <end position="21"/>
    </location>
</feature>
<feature type="transmembrane region" description="Helical" evidence="1">
    <location>
        <begin position="39"/>
        <end position="59"/>
    </location>
</feature>
<feature type="transmembrane region" description="Helical" evidence="1">
    <location>
        <begin position="84"/>
        <end position="104"/>
    </location>
</feature>
<feature type="transmembrane region" description="Helical" evidence="1">
    <location>
        <begin position="114"/>
        <end position="134"/>
    </location>
</feature>
<feature type="transmembrane region" description="Helical" evidence="1">
    <location>
        <begin position="144"/>
        <end position="164"/>
    </location>
</feature>
<feature type="transmembrane region" description="Helical" evidence="1">
    <location>
        <begin position="187"/>
        <end position="207"/>
    </location>
</feature>
<feature type="transmembrane region" description="Helical" evidence="1">
    <location>
        <begin position="218"/>
        <end position="238"/>
    </location>
</feature>
<feature type="transmembrane region" description="Helical" evidence="1">
    <location>
        <begin position="244"/>
        <end position="264"/>
    </location>
</feature>
<proteinExistence type="inferred from homology"/>
<keyword id="KW-0046">Antibiotic resistance</keyword>
<keyword id="KW-0997">Cell inner membrane</keyword>
<keyword id="KW-1003">Cell membrane</keyword>
<keyword id="KW-0133">Cell shape</keyword>
<keyword id="KW-0961">Cell wall biogenesis/degradation</keyword>
<keyword id="KW-0378">Hydrolase</keyword>
<keyword id="KW-0472">Membrane</keyword>
<keyword id="KW-0573">Peptidoglycan synthesis</keyword>
<keyword id="KW-0812">Transmembrane</keyword>
<keyword id="KW-1133">Transmembrane helix</keyword>
<sequence length="265" mass="28784">MDIFQALFLGLLQGLTEFLPISSSAHLILTPAFFGWEDQGVGFDLSVHVGTLLAVVLYFRRDVFGIARDGLISMGQRKIVGQGALAWYLVIGTIPAGLAGLALLDMIDNELRGASVIFFTTLVFGILLGIADWLPKRQRTMDSLNWKDAVIVGIAQAMALVPGTSRSGVTITAGLFLGMTRETASRFSFLLAIPIIVLASAVKLLEVATSDVIVDWNGFLIGGVTSFLMAITAIHFFLKWLNKVGMWPYVIYRIILAGVIYAVLM</sequence>
<organism>
    <name type="scientific">Marinobacter nauticus (strain ATCC 700491 / DSM 11845 / VT8)</name>
    <name type="common">Marinobacter aquaeolei</name>
    <dbReference type="NCBI Taxonomy" id="351348"/>
    <lineage>
        <taxon>Bacteria</taxon>
        <taxon>Pseudomonadati</taxon>
        <taxon>Pseudomonadota</taxon>
        <taxon>Gammaproteobacteria</taxon>
        <taxon>Pseudomonadales</taxon>
        <taxon>Marinobacteraceae</taxon>
        <taxon>Marinobacter</taxon>
    </lineage>
</organism>
<accession>A1U6U1</accession>
<dbReference type="EC" id="3.6.1.27" evidence="1"/>
<dbReference type="EMBL" id="CP000514">
    <property type="protein sequence ID" value="ABM20710.1"/>
    <property type="molecule type" value="Genomic_DNA"/>
</dbReference>
<dbReference type="RefSeq" id="WP_011787048.1">
    <property type="nucleotide sequence ID" value="NC_008740.1"/>
</dbReference>
<dbReference type="SMR" id="A1U6U1"/>
<dbReference type="STRING" id="351348.Maqu_3641"/>
<dbReference type="DNASU" id="4654020"/>
<dbReference type="GeneID" id="31822886"/>
<dbReference type="KEGG" id="maq:Maqu_3641"/>
<dbReference type="eggNOG" id="COG1968">
    <property type="taxonomic scope" value="Bacteria"/>
</dbReference>
<dbReference type="HOGENOM" id="CLU_060296_1_0_6"/>
<dbReference type="OrthoDB" id="9808289at2"/>
<dbReference type="Proteomes" id="UP000000998">
    <property type="component" value="Chromosome"/>
</dbReference>
<dbReference type="GO" id="GO:0005886">
    <property type="term" value="C:plasma membrane"/>
    <property type="evidence" value="ECO:0007669"/>
    <property type="project" value="UniProtKB-SubCell"/>
</dbReference>
<dbReference type="GO" id="GO:0050380">
    <property type="term" value="F:undecaprenyl-diphosphatase activity"/>
    <property type="evidence" value="ECO:0007669"/>
    <property type="project" value="UniProtKB-UniRule"/>
</dbReference>
<dbReference type="GO" id="GO:0071555">
    <property type="term" value="P:cell wall organization"/>
    <property type="evidence" value="ECO:0007669"/>
    <property type="project" value="UniProtKB-KW"/>
</dbReference>
<dbReference type="GO" id="GO:0009252">
    <property type="term" value="P:peptidoglycan biosynthetic process"/>
    <property type="evidence" value="ECO:0007669"/>
    <property type="project" value="UniProtKB-KW"/>
</dbReference>
<dbReference type="GO" id="GO:0008360">
    <property type="term" value="P:regulation of cell shape"/>
    <property type="evidence" value="ECO:0007669"/>
    <property type="project" value="UniProtKB-KW"/>
</dbReference>
<dbReference type="GO" id="GO:0046677">
    <property type="term" value="P:response to antibiotic"/>
    <property type="evidence" value="ECO:0007669"/>
    <property type="project" value="UniProtKB-UniRule"/>
</dbReference>
<dbReference type="HAMAP" id="MF_01006">
    <property type="entry name" value="Undec_diphosphatase"/>
    <property type="match status" value="1"/>
</dbReference>
<dbReference type="InterPro" id="IPR003824">
    <property type="entry name" value="UppP"/>
</dbReference>
<dbReference type="NCBIfam" id="NF001393">
    <property type="entry name" value="PRK00281.2-4"/>
    <property type="match status" value="1"/>
</dbReference>
<dbReference type="NCBIfam" id="TIGR00753">
    <property type="entry name" value="undec_PP_bacA"/>
    <property type="match status" value="1"/>
</dbReference>
<dbReference type="PANTHER" id="PTHR30622">
    <property type="entry name" value="UNDECAPRENYL-DIPHOSPHATASE"/>
    <property type="match status" value="1"/>
</dbReference>
<dbReference type="PANTHER" id="PTHR30622:SF4">
    <property type="entry name" value="UNDECAPRENYL-DIPHOSPHATASE"/>
    <property type="match status" value="1"/>
</dbReference>
<dbReference type="Pfam" id="PF02673">
    <property type="entry name" value="BacA"/>
    <property type="match status" value="1"/>
</dbReference>
<name>UPPP_MARN8</name>